<feature type="chain" id="PRO_1000166385" description="Large ribosomal subunit protein uL16">
    <location>
        <begin position="1"/>
        <end position="137"/>
    </location>
</feature>
<keyword id="KW-0687">Ribonucleoprotein</keyword>
<keyword id="KW-0689">Ribosomal protein</keyword>
<keyword id="KW-0694">RNA-binding</keyword>
<keyword id="KW-0699">rRNA-binding</keyword>
<keyword id="KW-0820">tRNA-binding</keyword>
<name>RL16_STRZT</name>
<protein>
    <recommendedName>
        <fullName evidence="1">Large ribosomal subunit protein uL16</fullName>
    </recommendedName>
    <alternativeName>
        <fullName evidence="2">50S ribosomal protein L16</fullName>
    </alternativeName>
</protein>
<reference key="1">
    <citation type="journal article" date="2010" name="Genome Biol.">
        <title>Structure and dynamics of the pan-genome of Streptococcus pneumoniae and closely related species.</title>
        <authorList>
            <person name="Donati C."/>
            <person name="Hiller N.L."/>
            <person name="Tettelin H."/>
            <person name="Muzzi A."/>
            <person name="Croucher N.J."/>
            <person name="Angiuoli S.V."/>
            <person name="Oggioni M."/>
            <person name="Dunning Hotopp J.C."/>
            <person name="Hu F.Z."/>
            <person name="Riley D.R."/>
            <person name="Covacci A."/>
            <person name="Mitchell T.J."/>
            <person name="Bentley S.D."/>
            <person name="Kilian M."/>
            <person name="Ehrlich G.D."/>
            <person name="Rappuoli R."/>
            <person name="Moxon E.R."/>
            <person name="Masignani V."/>
        </authorList>
    </citation>
    <scope>NUCLEOTIDE SEQUENCE [LARGE SCALE GENOMIC DNA]</scope>
    <source>
        <strain>Taiwan19F-14</strain>
    </source>
</reference>
<comment type="function">
    <text evidence="1">Binds 23S rRNA and is also seen to make contacts with the A and possibly P site tRNAs.</text>
</comment>
<comment type="subunit">
    <text evidence="1">Part of the 50S ribosomal subunit.</text>
</comment>
<comment type="similarity">
    <text evidence="1">Belongs to the universal ribosomal protein uL16 family.</text>
</comment>
<accession>C1CP95</accession>
<gene>
    <name evidence="1" type="primary">rplP</name>
    <name type="ordered locus">SPT_0263</name>
</gene>
<dbReference type="EMBL" id="CP000921">
    <property type="protein sequence ID" value="ACO23002.1"/>
    <property type="molecule type" value="Genomic_DNA"/>
</dbReference>
<dbReference type="RefSeq" id="WP_000960946.1">
    <property type="nucleotide sequence ID" value="NC_012469.1"/>
</dbReference>
<dbReference type="SMR" id="C1CP95"/>
<dbReference type="GeneID" id="93738964"/>
<dbReference type="KEGG" id="snt:SPT_0263"/>
<dbReference type="HOGENOM" id="CLU_078858_2_1_9"/>
<dbReference type="GO" id="GO:0022625">
    <property type="term" value="C:cytosolic large ribosomal subunit"/>
    <property type="evidence" value="ECO:0007669"/>
    <property type="project" value="TreeGrafter"/>
</dbReference>
<dbReference type="GO" id="GO:0019843">
    <property type="term" value="F:rRNA binding"/>
    <property type="evidence" value="ECO:0007669"/>
    <property type="project" value="UniProtKB-UniRule"/>
</dbReference>
<dbReference type="GO" id="GO:0003735">
    <property type="term" value="F:structural constituent of ribosome"/>
    <property type="evidence" value="ECO:0007669"/>
    <property type="project" value="InterPro"/>
</dbReference>
<dbReference type="GO" id="GO:0000049">
    <property type="term" value="F:tRNA binding"/>
    <property type="evidence" value="ECO:0007669"/>
    <property type="project" value="UniProtKB-KW"/>
</dbReference>
<dbReference type="GO" id="GO:0006412">
    <property type="term" value="P:translation"/>
    <property type="evidence" value="ECO:0007669"/>
    <property type="project" value="UniProtKB-UniRule"/>
</dbReference>
<dbReference type="CDD" id="cd01433">
    <property type="entry name" value="Ribosomal_L16_L10e"/>
    <property type="match status" value="1"/>
</dbReference>
<dbReference type="FunFam" id="3.90.1170.10:FF:000001">
    <property type="entry name" value="50S ribosomal protein L16"/>
    <property type="match status" value="1"/>
</dbReference>
<dbReference type="Gene3D" id="3.90.1170.10">
    <property type="entry name" value="Ribosomal protein L10e/L16"/>
    <property type="match status" value="1"/>
</dbReference>
<dbReference type="HAMAP" id="MF_01342">
    <property type="entry name" value="Ribosomal_uL16"/>
    <property type="match status" value="1"/>
</dbReference>
<dbReference type="InterPro" id="IPR047873">
    <property type="entry name" value="Ribosomal_uL16"/>
</dbReference>
<dbReference type="InterPro" id="IPR000114">
    <property type="entry name" value="Ribosomal_uL16_bact-type"/>
</dbReference>
<dbReference type="InterPro" id="IPR020798">
    <property type="entry name" value="Ribosomal_uL16_CS"/>
</dbReference>
<dbReference type="InterPro" id="IPR016180">
    <property type="entry name" value="Ribosomal_uL16_dom"/>
</dbReference>
<dbReference type="InterPro" id="IPR036920">
    <property type="entry name" value="Ribosomal_uL16_sf"/>
</dbReference>
<dbReference type="NCBIfam" id="TIGR01164">
    <property type="entry name" value="rplP_bact"/>
    <property type="match status" value="1"/>
</dbReference>
<dbReference type="PANTHER" id="PTHR12220">
    <property type="entry name" value="50S/60S RIBOSOMAL PROTEIN L16"/>
    <property type="match status" value="1"/>
</dbReference>
<dbReference type="PANTHER" id="PTHR12220:SF13">
    <property type="entry name" value="LARGE RIBOSOMAL SUBUNIT PROTEIN UL16M"/>
    <property type="match status" value="1"/>
</dbReference>
<dbReference type="Pfam" id="PF00252">
    <property type="entry name" value="Ribosomal_L16"/>
    <property type="match status" value="1"/>
</dbReference>
<dbReference type="PRINTS" id="PR00060">
    <property type="entry name" value="RIBOSOMALL16"/>
</dbReference>
<dbReference type="SUPFAM" id="SSF54686">
    <property type="entry name" value="Ribosomal protein L16p/L10e"/>
    <property type="match status" value="1"/>
</dbReference>
<dbReference type="PROSITE" id="PS00586">
    <property type="entry name" value="RIBOSOMAL_L16_1"/>
    <property type="match status" value="1"/>
</dbReference>
<dbReference type="PROSITE" id="PS00701">
    <property type="entry name" value="RIBOSOMAL_L16_2"/>
    <property type="match status" value="1"/>
</dbReference>
<organism>
    <name type="scientific">Streptococcus pneumoniae (strain Taiwan19F-14)</name>
    <dbReference type="NCBI Taxonomy" id="487213"/>
    <lineage>
        <taxon>Bacteria</taxon>
        <taxon>Bacillati</taxon>
        <taxon>Bacillota</taxon>
        <taxon>Bacilli</taxon>
        <taxon>Lactobacillales</taxon>
        <taxon>Streptococcaceae</taxon>
        <taxon>Streptococcus</taxon>
    </lineage>
</organism>
<proteinExistence type="inferred from homology"/>
<sequence length="137" mass="15436">MLVPKRVKHRREFRGKMRGEAKGGKEVAFGEYGLQATTSHWITNRQIEAARIAMTRYMKRGGKVWIKIFPHKSYTAKAIGVRMGSGKGAPEGWVAPVKRGKVMFEIAGVSEEIAREALRLASHKLPVKCKFVKREAE</sequence>
<evidence type="ECO:0000255" key="1">
    <source>
        <dbReference type="HAMAP-Rule" id="MF_01342"/>
    </source>
</evidence>
<evidence type="ECO:0000305" key="2"/>